<dbReference type="PIR" id="A41978">
    <property type="entry name" value="A41978"/>
</dbReference>
<dbReference type="GO" id="GO:0005576">
    <property type="term" value="C:extracellular region"/>
    <property type="evidence" value="ECO:0007669"/>
    <property type="project" value="UniProtKB-SubCell"/>
</dbReference>
<dbReference type="GO" id="GO:0007218">
    <property type="term" value="P:neuropeptide signaling pathway"/>
    <property type="evidence" value="ECO:0007669"/>
    <property type="project" value="UniProtKB-KW"/>
</dbReference>
<keyword id="KW-0027">Amidation</keyword>
<keyword id="KW-0903">Direct protein sequencing</keyword>
<keyword id="KW-0527">Neuropeptide</keyword>
<keyword id="KW-0964">Secreted</keyword>
<name>FAR1_CALVO</name>
<accession>P41856</accession>
<proteinExistence type="evidence at protein level"/>
<protein>
    <recommendedName>
        <fullName>CalliFMRFamide-1</fullName>
    </recommendedName>
</protein>
<feature type="peptide" id="PRO_0000043663" description="CalliFMRFamide-1">
    <location>
        <begin position="1"/>
        <end position="9"/>
    </location>
</feature>
<feature type="modified residue" description="Phenylalanine amide" evidence="1">
    <location>
        <position position="9"/>
    </location>
</feature>
<comment type="function">
    <text>Able to induce fluid secretion from the isolated salivary gland of Calliphora.</text>
</comment>
<comment type="subcellular location">
    <subcellularLocation>
        <location>Secreted</location>
    </subcellularLocation>
</comment>
<comment type="similarity">
    <text evidence="2">Belongs to the FARP (FMRFamide related peptide) family.</text>
</comment>
<organism>
    <name type="scientific">Calliphora vomitoria</name>
    <name type="common">Blue bottle fly</name>
    <name type="synonym">Musca vomitoria</name>
    <dbReference type="NCBI Taxonomy" id="27454"/>
    <lineage>
        <taxon>Eukaryota</taxon>
        <taxon>Metazoa</taxon>
        <taxon>Ecdysozoa</taxon>
        <taxon>Arthropoda</taxon>
        <taxon>Hexapoda</taxon>
        <taxon>Insecta</taxon>
        <taxon>Pterygota</taxon>
        <taxon>Neoptera</taxon>
        <taxon>Endopterygota</taxon>
        <taxon>Diptera</taxon>
        <taxon>Brachycera</taxon>
        <taxon>Muscomorpha</taxon>
        <taxon>Oestroidea</taxon>
        <taxon>Calliphoridae</taxon>
        <taxon>Calliphorinae</taxon>
        <taxon>Calliphora</taxon>
    </lineage>
</organism>
<sequence length="9" mass="1169">TPQQDFMRF</sequence>
<evidence type="ECO:0000269" key="1">
    <source>
    </source>
</evidence>
<evidence type="ECO:0000305" key="2"/>
<reference key="1">
    <citation type="journal article" date="1992" name="Proc. Natl. Acad. Sci. U.S.A.">
        <title>Isolation, structure, and activity of -Phe-Met-Arg-Phe-NH2 neuropeptides (designated calliFMRFamides) from the blowfly Calliphora vomitoria.</title>
        <authorList>
            <person name="Duve H."/>
            <person name="Johnsen A.H."/>
            <person name="Sewell J.C."/>
            <person name="Scott A.G."/>
            <person name="Orchard I."/>
            <person name="Rehfeld J.F."/>
            <person name="Thorpe A."/>
        </authorList>
    </citation>
    <scope>PROTEIN SEQUENCE</scope>
    <scope>AMIDATION AT PHE-9</scope>
    <source>
        <tissue>Thoracic ganglion</tissue>
    </source>
</reference>